<evidence type="ECO:0000255" key="1">
    <source>
        <dbReference type="HAMAP-Rule" id="MF_00148"/>
    </source>
</evidence>
<keyword id="KW-0963">Cytoplasm</keyword>
<keyword id="KW-0227">DNA damage</keyword>
<keyword id="KW-0234">DNA repair</keyword>
<keyword id="KW-0378">Hydrolase</keyword>
<reference key="1">
    <citation type="submission" date="2008-10" db="EMBL/GenBank/DDBJ databases">
        <title>Genome sequence of Ureaplasma urealyticum serovar 10 ATCC-33699.</title>
        <authorList>
            <person name="Shrivastava S."/>
            <person name="Methe B.A."/>
            <person name="Glass J."/>
            <person name="White K."/>
            <person name="Duffy L.B."/>
        </authorList>
    </citation>
    <scope>NUCLEOTIDE SEQUENCE [LARGE SCALE GENOMIC DNA]</scope>
    <source>
        <strain>ATCC 33699 / Western</strain>
    </source>
</reference>
<name>UNG_UREU1</name>
<accession>B5ZC55</accession>
<dbReference type="EC" id="3.2.2.27" evidence="1"/>
<dbReference type="EMBL" id="CP001184">
    <property type="protein sequence ID" value="ACI60274.1"/>
    <property type="molecule type" value="Genomic_DNA"/>
</dbReference>
<dbReference type="RefSeq" id="WP_004025643.1">
    <property type="nucleotide sequence ID" value="NC_011374.1"/>
</dbReference>
<dbReference type="SMR" id="B5ZC55"/>
<dbReference type="STRING" id="565575.UUR10_0639"/>
<dbReference type="KEGG" id="uue:UUR10_0639"/>
<dbReference type="eggNOG" id="COG0692">
    <property type="taxonomic scope" value="Bacteria"/>
</dbReference>
<dbReference type="HOGENOM" id="CLU_032162_3_2_14"/>
<dbReference type="OrthoDB" id="9804372at2"/>
<dbReference type="Proteomes" id="UP000002018">
    <property type="component" value="Chromosome"/>
</dbReference>
<dbReference type="GO" id="GO:0005737">
    <property type="term" value="C:cytoplasm"/>
    <property type="evidence" value="ECO:0007669"/>
    <property type="project" value="UniProtKB-SubCell"/>
</dbReference>
<dbReference type="GO" id="GO:0004844">
    <property type="term" value="F:uracil DNA N-glycosylase activity"/>
    <property type="evidence" value="ECO:0007669"/>
    <property type="project" value="UniProtKB-UniRule"/>
</dbReference>
<dbReference type="GO" id="GO:0097510">
    <property type="term" value="P:base-excision repair, AP site formation via deaminated base removal"/>
    <property type="evidence" value="ECO:0007669"/>
    <property type="project" value="TreeGrafter"/>
</dbReference>
<dbReference type="CDD" id="cd10027">
    <property type="entry name" value="UDG-F1-like"/>
    <property type="match status" value="1"/>
</dbReference>
<dbReference type="Gene3D" id="3.40.470.10">
    <property type="entry name" value="Uracil-DNA glycosylase-like domain"/>
    <property type="match status" value="1"/>
</dbReference>
<dbReference type="HAMAP" id="MF_00148">
    <property type="entry name" value="UDG"/>
    <property type="match status" value="1"/>
</dbReference>
<dbReference type="InterPro" id="IPR002043">
    <property type="entry name" value="UDG_fam1"/>
</dbReference>
<dbReference type="InterPro" id="IPR018085">
    <property type="entry name" value="Ura-DNA_Glyclase_AS"/>
</dbReference>
<dbReference type="InterPro" id="IPR005122">
    <property type="entry name" value="Uracil-DNA_glycosylase-like"/>
</dbReference>
<dbReference type="InterPro" id="IPR036895">
    <property type="entry name" value="Uracil-DNA_glycosylase-like_sf"/>
</dbReference>
<dbReference type="NCBIfam" id="NF003588">
    <property type="entry name" value="PRK05254.1-1"/>
    <property type="match status" value="1"/>
</dbReference>
<dbReference type="NCBIfam" id="NF003589">
    <property type="entry name" value="PRK05254.1-2"/>
    <property type="match status" value="1"/>
</dbReference>
<dbReference type="NCBIfam" id="NF003592">
    <property type="entry name" value="PRK05254.1-5"/>
    <property type="match status" value="1"/>
</dbReference>
<dbReference type="NCBIfam" id="TIGR00628">
    <property type="entry name" value="ung"/>
    <property type="match status" value="1"/>
</dbReference>
<dbReference type="PANTHER" id="PTHR11264">
    <property type="entry name" value="URACIL-DNA GLYCOSYLASE"/>
    <property type="match status" value="1"/>
</dbReference>
<dbReference type="PANTHER" id="PTHR11264:SF0">
    <property type="entry name" value="URACIL-DNA GLYCOSYLASE"/>
    <property type="match status" value="1"/>
</dbReference>
<dbReference type="Pfam" id="PF03167">
    <property type="entry name" value="UDG"/>
    <property type="match status" value="1"/>
</dbReference>
<dbReference type="SMART" id="SM00986">
    <property type="entry name" value="UDG"/>
    <property type="match status" value="1"/>
</dbReference>
<dbReference type="SMART" id="SM00987">
    <property type="entry name" value="UreE_C"/>
    <property type="match status" value="1"/>
</dbReference>
<dbReference type="SUPFAM" id="SSF52141">
    <property type="entry name" value="Uracil-DNA glycosylase-like"/>
    <property type="match status" value="1"/>
</dbReference>
<dbReference type="PROSITE" id="PS00130">
    <property type="entry name" value="U_DNA_GLYCOSYLASE"/>
    <property type="match status" value="1"/>
</dbReference>
<proteinExistence type="inferred from homology"/>
<sequence>MKWKEFIINQTKQDYLRNIIQKVNTIENHQVVYPLKKQRFRCFNFFDIEQTKVVILGQDPYHTPKMANGLCFSVDLGNNLPGSLVNIFKALEYDLQIKRTNPDLSDWAKQGVLLLNTVLTVNAHQANSHKDFGYDQLIKNAFIELKKQKHVVYLLWGKQAMSYIDLIDKDHNLILCAPHPSPLSAHRGFLTCKHFSACNDYLIKHFRTPIKW</sequence>
<comment type="function">
    <text evidence="1">Excises uracil residues from the DNA which can arise as a result of misincorporation of dUMP residues by DNA polymerase or due to deamination of cytosine.</text>
</comment>
<comment type="catalytic activity">
    <reaction evidence="1">
        <text>Hydrolyzes single-stranded DNA or mismatched double-stranded DNA and polynucleotides, releasing free uracil.</text>
        <dbReference type="EC" id="3.2.2.27"/>
    </reaction>
</comment>
<comment type="subcellular location">
    <subcellularLocation>
        <location evidence="1">Cytoplasm</location>
    </subcellularLocation>
</comment>
<comment type="similarity">
    <text evidence="1">Belongs to the uracil-DNA glycosylase (UDG) superfamily. UNG family.</text>
</comment>
<protein>
    <recommendedName>
        <fullName evidence="1">Uracil-DNA glycosylase</fullName>
        <shortName evidence="1">UDG</shortName>
        <ecNumber evidence="1">3.2.2.27</ecNumber>
    </recommendedName>
</protein>
<gene>
    <name evidence="1" type="primary">ung</name>
    <name type="ordered locus">UUR10_0639</name>
</gene>
<feature type="chain" id="PRO_1000096614" description="Uracil-DNA glycosylase">
    <location>
        <begin position="1"/>
        <end position="212"/>
    </location>
</feature>
<feature type="active site" description="Proton acceptor" evidence="1">
    <location>
        <position position="59"/>
    </location>
</feature>
<organism>
    <name type="scientific">Ureaplasma urealyticum serovar 10 (strain ATCC 33699 / Western)</name>
    <dbReference type="NCBI Taxonomy" id="565575"/>
    <lineage>
        <taxon>Bacteria</taxon>
        <taxon>Bacillati</taxon>
        <taxon>Mycoplasmatota</taxon>
        <taxon>Mycoplasmoidales</taxon>
        <taxon>Mycoplasmoidaceae</taxon>
        <taxon>Ureaplasma</taxon>
    </lineage>
</organism>